<sequence length="202" mass="22771">MDFVNNDTRQIAKNLLGVKVIYQDTTQTYTGYIVETEAYLGLNDRAAHGYGGKITPKVTSLYKRGGTIYAHVMHTHLLINFVTKSEGIPEGVLIRAIEPEEGLSAMFRNRGKKGYEVTNGPGKWTKAFNIPRAIDGATLNDCRLSIDTKNRKYPKDIIASPRIGIPNKGDWTHKSLRYTVKGNPFVSRMRKSDCMFPEDTWK</sequence>
<organism>
    <name type="scientific">Staphylococcus aureus (strain Mu50 / ATCC 700699)</name>
    <dbReference type="NCBI Taxonomy" id="158878"/>
    <lineage>
        <taxon>Bacteria</taxon>
        <taxon>Bacillati</taxon>
        <taxon>Bacillota</taxon>
        <taxon>Bacilli</taxon>
        <taxon>Bacillales</taxon>
        <taxon>Staphylococcaceae</taxon>
        <taxon>Staphylococcus</taxon>
    </lineage>
</organism>
<evidence type="ECO:0000255" key="1">
    <source>
        <dbReference type="HAMAP-Rule" id="MF_00527"/>
    </source>
</evidence>
<reference key="1">
    <citation type="journal article" date="2001" name="Lancet">
        <title>Whole genome sequencing of meticillin-resistant Staphylococcus aureus.</title>
        <authorList>
            <person name="Kuroda M."/>
            <person name="Ohta T."/>
            <person name="Uchiyama I."/>
            <person name="Baba T."/>
            <person name="Yuzawa H."/>
            <person name="Kobayashi I."/>
            <person name="Cui L."/>
            <person name="Oguchi A."/>
            <person name="Aoki K."/>
            <person name="Nagai Y."/>
            <person name="Lian J.-Q."/>
            <person name="Ito T."/>
            <person name="Kanamori M."/>
            <person name="Matsumaru H."/>
            <person name="Maruyama A."/>
            <person name="Murakami H."/>
            <person name="Hosoyama A."/>
            <person name="Mizutani-Ui Y."/>
            <person name="Takahashi N.K."/>
            <person name="Sawano T."/>
            <person name="Inoue R."/>
            <person name="Kaito C."/>
            <person name="Sekimizu K."/>
            <person name="Hirakawa H."/>
            <person name="Kuhara S."/>
            <person name="Goto S."/>
            <person name="Yabuzaki J."/>
            <person name="Kanehisa M."/>
            <person name="Yamashita A."/>
            <person name="Oshima K."/>
            <person name="Furuya K."/>
            <person name="Yoshino C."/>
            <person name="Shiba T."/>
            <person name="Hattori M."/>
            <person name="Ogasawara N."/>
            <person name="Hayashi H."/>
            <person name="Hiramatsu K."/>
        </authorList>
    </citation>
    <scope>NUCLEOTIDE SEQUENCE [LARGE SCALE GENOMIC DNA]</scope>
    <source>
        <strain>Mu50 / ATCC 700699</strain>
    </source>
</reference>
<proteinExistence type="inferred from homology"/>
<name>3MGH_STAAM</name>
<protein>
    <recommendedName>
        <fullName evidence="1">Putative 3-methyladenine DNA glycosylase</fullName>
        <ecNumber evidence="1">3.2.2.-</ecNumber>
    </recommendedName>
</protein>
<feature type="chain" id="PRO_0000100104" description="Putative 3-methyladenine DNA glycosylase">
    <location>
        <begin position="1"/>
        <end position="202"/>
    </location>
</feature>
<comment type="similarity">
    <text evidence="1">Belongs to the DNA glycosylase MPG family.</text>
</comment>
<dbReference type="EC" id="3.2.2.-" evidence="1"/>
<dbReference type="EMBL" id="BA000017">
    <property type="protein sequence ID" value="BAB58506.1"/>
    <property type="molecule type" value="Genomic_DNA"/>
</dbReference>
<dbReference type="RefSeq" id="WP_000348300.1">
    <property type="nucleotide sequence ID" value="NC_002758.2"/>
</dbReference>
<dbReference type="SMR" id="P65414"/>
<dbReference type="KEGG" id="sav:SAV2344"/>
<dbReference type="HOGENOM" id="CLU_060471_2_0_9"/>
<dbReference type="PhylomeDB" id="P65414"/>
<dbReference type="Proteomes" id="UP000002481">
    <property type="component" value="Chromosome"/>
</dbReference>
<dbReference type="GO" id="GO:0003905">
    <property type="term" value="F:alkylbase DNA N-glycosylase activity"/>
    <property type="evidence" value="ECO:0007669"/>
    <property type="project" value="InterPro"/>
</dbReference>
<dbReference type="GO" id="GO:0003677">
    <property type="term" value="F:DNA binding"/>
    <property type="evidence" value="ECO:0007669"/>
    <property type="project" value="InterPro"/>
</dbReference>
<dbReference type="GO" id="GO:0006284">
    <property type="term" value="P:base-excision repair"/>
    <property type="evidence" value="ECO:0007669"/>
    <property type="project" value="InterPro"/>
</dbReference>
<dbReference type="CDD" id="cd00540">
    <property type="entry name" value="AAG"/>
    <property type="match status" value="1"/>
</dbReference>
<dbReference type="FunFam" id="3.10.300.10:FF:000001">
    <property type="entry name" value="Putative 3-methyladenine DNA glycosylase"/>
    <property type="match status" value="1"/>
</dbReference>
<dbReference type="Gene3D" id="3.10.300.10">
    <property type="entry name" value="Methylpurine-DNA glycosylase (MPG)"/>
    <property type="match status" value="1"/>
</dbReference>
<dbReference type="HAMAP" id="MF_00527">
    <property type="entry name" value="3MGH"/>
    <property type="match status" value="1"/>
</dbReference>
<dbReference type="InterPro" id="IPR011034">
    <property type="entry name" value="Formyl_transferase-like_C_sf"/>
</dbReference>
<dbReference type="InterPro" id="IPR003180">
    <property type="entry name" value="MPG"/>
</dbReference>
<dbReference type="InterPro" id="IPR036995">
    <property type="entry name" value="MPG_sf"/>
</dbReference>
<dbReference type="NCBIfam" id="TIGR00567">
    <property type="entry name" value="3mg"/>
    <property type="match status" value="1"/>
</dbReference>
<dbReference type="PANTHER" id="PTHR10429">
    <property type="entry name" value="DNA-3-METHYLADENINE GLYCOSYLASE"/>
    <property type="match status" value="1"/>
</dbReference>
<dbReference type="PANTHER" id="PTHR10429:SF0">
    <property type="entry name" value="DNA-3-METHYLADENINE GLYCOSYLASE"/>
    <property type="match status" value="1"/>
</dbReference>
<dbReference type="Pfam" id="PF02245">
    <property type="entry name" value="Pur_DNA_glyco"/>
    <property type="match status" value="1"/>
</dbReference>
<dbReference type="SUPFAM" id="SSF50486">
    <property type="entry name" value="FMT C-terminal domain-like"/>
    <property type="match status" value="1"/>
</dbReference>
<accession>P65414</accession>
<accession>Q99RS9</accession>
<gene>
    <name type="ordered locus">SAV2344</name>
</gene>
<keyword id="KW-0227">DNA damage</keyword>
<keyword id="KW-0234">DNA repair</keyword>
<keyword id="KW-0378">Hydrolase</keyword>